<dbReference type="EC" id="1.14.14.154" evidence="1 2"/>
<dbReference type="EMBL" id="DQ074804">
    <property type="protein sequence ID" value="AAZ29450.1"/>
    <property type="molecule type" value="mRNA"/>
</dbReference>
<dbReference type="EMBL" id="AB168372">
    <property type="protein sequence ID" value="BAE00495.1"/>
    <property type="molecule type" value="mRNA"/>
</dbReference>
<dbReference type="EMBL" id="AB169425">
    <property type="protein sequence ID" value="BAE01508.1"/>
    <property type="status" value="ALT_INIT"/>
    <property type="molecule type" value="mRNA"/>
</dbReference>
<dbReference type="RefSeq" id="NP_001274625.1">
    <property type="nucleotide sequence ID" value="NM_001287696.1"/>
</dbReference>
<dbReference type="RefSeq" id="XP_045244680.1">
    <property type="nucleotide sequence ID" value="XM_045388745.2"/>
</dbReference>
<dbReference type="SMR" id="Q4R8S6"/>
<dbReference type="STRING" id="9541.ENSMFAP00000041467"/>
<dbReference type="Ensembl" id="ENSMFAT00000015743.2">
    <property type="protein sequence ID" value="ENSMFAP00000041467.1"/>
    <property type="gene ID" value="ENSMFAG00000041456.2"/>
</dbReference>
<dbReference type="GeneID" id="102146764"/>
<dbReference type="VGNC" id="VGNC:83109">
    <property type="gene designation" value="CYP51A1"/>
</dbReference>
<dbReference type="eggNOG" id="KOG0684">
    <property type="taxonomic scope" value="Eukaryota"/>
</dbReference>
<dbReference type="GeneTree" id="ENSGT00930000151026"/>
<dbReference type="OMA" id="HWFPFVG"/>
<dbReference type="UniPathway" id="UPA00770">
    <property type="reaction ID" value="UER00754"/>
</dbReference>
<dbReference type="Proteomes" id="UP000233100">
    <property type="component" value="Chromosome 3"/>
</dbReference>
<dbReference type="GO" id="GO:0005789">
    <property type="term" value="C:endoplasmic reticulum membrane"/>
    <property type="evidence" value="ECO:0007669"/>
    <property type="project" value="UniProtKB-SubCell"/>
</dbReference>
<dbReference type="GO" id="GO:0020037">
    <property type="term" value="F:heme binding"/>
    <property type="evidence" value="ECO:0000250"/>
    <property type="project" value="UniProtKB"/>
</dbReference>
<dbReference type="GO" id="GO:0005506">
    <property type="term" value="F:iron ion binding"/>
    <property type="evidence" value="ECO:0007669"/>
    <property type="project" value="InterPro"/>
</dbReference>
<dbReference type="GO" id="GO:0008398">
    <property type="term" value="F:sterol 14-demethylase activity"/>
    <property type="evidence" value="ECO:0000250"/>
    <property type="project" value="UniProtKB"/>
</dbReference>
<dbReference type="GO" id="GO:0006695">
    <property type="term" value="P:cholesterol biosynthetic process"/>
    <property type="evidence" value="ECO:0007669"/>
    <property type="project" value="UniProtKB-KW"/>
</dbReference>
<dbReference type="GO" id="GO:0006694">
    <property type="term" value="P:steroid biosynthetic process"/>
    <property type="evidence" value="ECO:0000250"/>
    <property type="project" value="UniProtKB"/>
</dbReference>
<dbReference type="CDD" id="cd11042">
    <property type="entry name" value="CYP51-like"/>
    <property type="match status" value="1"/>
</dbReference>
<dbReference type="FunFam" id="1.10.630.10:FF:000027">
    <property type="entry name" value="lanosterol 14-alpha demethylase isoform X1"/>
    <property type="match status" value="1"/>
</dbReference>
<dbReference type="Gene3D" id="1.10.630.10">
    <property type="entry name" value="Cytochrome P450"/>
    <property type="match status" value="1"/>
</dbReference>
<dbReference type="InterPro" id="IPR050529">
    <property type="entry name" value="CYP450_sterol_14alpha_dmase"/>
</dbReference>
<dbReference type="InterPro" id="IPR001128">
    <property type="entry name" value="Cyt_P450"/>
</dbReference>
<dbReference type="InterPro" id="IPR017972">
    <property type="entry name" value="Cyt_P450_CS"/>
</dbReference>
<dbReference type="InterPro" id="IPR002403">
    <property type="entry name" value="Cyt_P450_E_grp-IV"/>
</dbReference>
<dbReference type="InterPro" id="IPR036396">
    <property type="entry name" value="Cyt_P450_sf"/>
</dbReference>
<dbReference type="PANTHER" id="PTHR24304:SF2">
    <property type="entry name" value="24-HYDROXYCHOLESTEROL 7-ALPHA-HYDROXYLASE"/>
    <property type="match status" value="1"/>
</dbReference>
<dbReference type="PANTHER" id="PTHR24304">
    <property type="entry name" value="CYTOCHROME P450 FAMILY 7"/>
    <property type="match status" value="1"/>
</dbReference>
<dbReference type="Pfam" id="PF00067">
    <property type="entry name" value="p450"/>
    <property type="match status" value="1"/>
</dbReference>
<dbReference type="PRINTS" id="PR00465">
    <property type="entry name" value="EP450IV"/>
</dbReference>
<dbReference type="PRINTS" id="PR00385">
    <property type="entry name" value="P450"/>
</dbReference>
<dbReference type="SUPFAM" id="SSF48264">
    <property type="entry name" value="Cytochrome P450"/>
    <property type="match status" value="1"/>
</dbReference>
<dbReference type="PROSITE" id="PS00086">
    <property type="entry name" value="CYTOCHROME_P450"/>
    <property type="match status" value="1"/>
</dbReference>
<organism>
    <name type="scientific">Macaca fascicularis</name>
    <name type="common">Crab-eating macaque</name>
    <name type="synonym">Cynomolgus monkey</name>
    <dbReference type="NCBI Taxonomy" id="9541"/>
    <lineage>
        <taxon>Eukaryota</taxon>
        <taxon>Metazoa</taxon>
        <taxon>Chordata</taxon>
        <taxon>Craniata</taxon>
        <taxon>Vertebrata</taxon>
        <taxon>Euteleostomi</taxon>
        <taxon>Mammalia</taxon>
        <taxon>Eutheria</taxon>
        <taxon>Euarchontoglires</taxon>
        <taxon>Primates</taxon>
        <taxon>Haplorrhini</taxon>
        <taxon>Catarrhini</taxon>
        <taxon>Cercopithecidae</taxon>
        <taxon>Cercopithecinae</taxon>
        <taxon>Macaca</taxon>
    </lineage>
</organism>
<comment type="function">
    <text evidence="2">Sterol 14alpha-demethylase that plays a critical role in the cholesterol biosynthesis pathway, being cholesterol the major sterol component in mammalian membranes as well as a precursor for bile acid and steroid hormone synthesis. Cytochrome P450 monooxygenase that catalyzes the three-step oxidative removal of the 14alpha-methyl group (C-32) of sterols such as lanosterol (lanosta-8,24-dien-3beta-ol) and 24,25-dihydrolanosterol (DHL) in the form of formate, and converts the sterols to 4,4-dimethyl-5alpha-cholesta-8,14,24-trien-3beta-ol and 4,4-dimethyl-8,14-cholestadien-3beta-ol, respectively, which are intermediates of cholesterol biosynthesis. Can also demethylate substrates not intrinsic to mammals, such as eburicol (24-methylene-24,25-dihydrolanosterol), but at a lower rate than DHL.</text>
</comment>
<comment type="catalytic activity">
    <reaction evidence="2">
        <text>a 14alpha-methyl steroid + 3 reduced [NADPH--hemoprotein reductase] + 3 O2 = a Delta(14) steroid + formate + 3 oxidized [NADPH--hemoprotein reductase] + 4 H2O + 4 H(+)</text>
        <dbReference type="Rhea" id="RHEA:54028"/>
        <dbReference type="Rhea" id="RHEA-COMP:11964"/>
        <dbReference type="Rhea" id="RHEA-COMP:11965"/>
        <dbReference type="ChEBI" id="CHEBI:15377"/>
        <dbReference type="ChEBI" id="CHEBI:15378"/>
        <dbReference type="ChEBI" id="CHEBI:15379"/>
        <dbReference type="ChEBI" id="CHEBI:15740"/>
        <dbReference type="ChEBI" id="CHEBI:57618"/>
        <dbReference type="ChEBI" id="CHEBI:58210"/>
        <dbReference type="ChEBI" id="CHEBI:138029"/>
        <dbReference type="ChEBI" id="CHEBI:138031"/>
        <dbReference type="EC" id="1.14.14.154"/>
    </reaction>
    <physiologicalReaction direction="left-to-right" evidence="2">
        <dbReference type="Rhea" id="RHEA:54029"/>
    </physiologicalReaction>
</comment>
<comment type="catalytic activity">
    <reaction evidence="2">
        <text>lanosterol + 3 reduced [NADPH--hemoprotein reductase] + 3 O2 = 4,4-dimethyl-5alpha-cholesta-8,14,24-trien-3beta-ol + formate + 3 oxidized [NADPH--hemoprotein reductase] + 4 H2O + 4 H(+)</text>
        <dbReference type="Rhea" id="RHEA:25286"/>
        <dbReference type="Rhea" id="RHEA-COMP:11964"/>
        <dbReference type="Rhea" id="RHEA-COMP:11965"/>
        <dbReference type="ChEBI" id="CHEBI:15377"/>
        <dbReference type="ChEBI" id="CHEBI:15378"/>
        <dbReference type="ChEBI" id="CHEBI:15379"/>
        <dbReference type="ChEBI" id="CHEBI:15740"/>
        <dbReference type="ChEBI" id="CHEBI:16521"/>
        <dbReference type="ChEBI" id="CHEBI:17813"/>
        <dbReference type="ChEBI" id="CHEBI:57618"/>
        <dbReference type="ChEBI" id="CHEBI:58210"/>
        <dbReference type="EC" id="1.14.14.154"/>
    </reaction>
    <physiologicalReaction direction="left-to-right" evidence="2">
        <dbReference type="Rhea" id="RHEA:25287"/>
    </physiologicalReaction>
</comment>
<comment type="catalytic activity">
    <reaction evidence="2">
        <text>24,25-dihydrolanosterol + 3 reduced [NADPH--hemoprotein reductase] + 3 O2 = 4,4-dimethyl-8,14-cholestadien-3beta-ol + formate + 3 oxidized [NADPH--hemoprotein reductase] + 4 H2O + 4 H(+)</text>
        <dbReference type="Rhea" id="RHEA:45960"/>
        <dbReference type="Rhea" id="RHEA-COMP:11964"/>
        <dbReference type="Rhea" id="RHEA-COMP:11965"/>
        <dbReference type="ChEBI" id="CHEBI:15377"/>
        <dbReference type="ChEBI" id="CHEBI:15378"/>
        <dbReference type="ChEBI" id="CHEBI:15379"/>
        <dbReference type="ChEBI" id="CHEBI:15740"/>
        <dbReference type="ChEBI" id="CHEBI:28113"/>
        <dbReference type="ChEBI" id="CHEBI:57618"/>
        <dbReference type="ChEBI" id="CHEBI:58210"/>
        <dbReference type="ChEBI" id="CHEBI:78904"/>
    </reaction>
    <physiologicalReaction direction="left-to-right" evidence="2">
        <dbReference type="Rhea" id="RHEA:45961"/>
    </physiologicalReaction>
</comment>
<comment type="catalytic activity">
    <reaction evidence="2">
        <text>a 14alpha-methyl steroid + reduced [NADPH--hemoprotein reductase] + O2 = a 14alpha-hydroxymethyl steroid + oxidized [NADPH--hemoprotein reductase] + H2O + H(+)</text>
        <dbReference type="Rhea" id="RHEA:68060"/>
        <dbReference type="Rhea" id="RHEA-COMP:11964"/>
        <dbReference type="Rhea" id="RHEA-COMP:11965"/>
        <dbReference type="ChEBI" id="CHEBI:15377"/>
        <dbReference type="ChEBI" id="CHEBI:15378"/>
        <dbReference type="ChEBI" id="CHEBI:15379"/>
        <dbReference type="ChEBI" id="CHEBI:57618"/>
        <dbReference type="ChEBI" id="CHEBI:58210"/>
        <dbReference type="ChEBI" id="CHEBI:138029"/>
        <dbReference type="ChEBI" id="CHEBI:176901"/>
    </reaction>
    <physiologicalReaction direction="left-to-right" evidence="2">
        <dbReference type="Rhea" id="RHEA:68061"/>
    </physiologicalReaction>
</comment>
<comment type="catalytic activity">
    <reaction evidence="2">
        <text>a 14alpha-hydroxymethyl steroid + reduced [NADPH--hemoprotein reductase] + O2 = a 14alpha-formyl steroid + oxidized [NADPH--hemoprotein reductase] + 2 H2O + H(+)</text>
        <dbReference type="Rhea" id="RHEA:68064"/>
        <dbReference type="Rhea" id="RHEA-COMP:11964"/>
        <dbReference type="Rhea" id="RHEA-COMP:11965"/>
        <dbReference type="ChEBI" id="CHEBI:15377"/>
        <dbReference type="ChEBI" id="CHEBI:15378"/>
        <dbReference type="ChEBI" id="CHEBI:15379"/>
        <dbReference type="ChEBI" id="CHEBI:57618"/>
        <dbReference type="ChEBI" id="CHEBI:58210"/>
        <dbReference type="ChEBI" id="CHEBI:176901"/>
        <dbReference type="ChEBI" id="CHEBI:176902"/>
    </reaction>
    <physiologicalReaction direction="left-to-right" evidence="2">
        <dbReference type="Rhea" id="RHEA:68065"/>
    </physiologicalReaction>
</comment>
<comment type="catalytic activity">
    <reaction evidence="2">
        <text>a 14alpha-formyl steroid + reduced [NADPH--hemoprotein reductase] + O2 = a Delta(14) steroid + formate + oxidized [NADPH--hemoprotein reductase] + H2O + 2 H(+)</text>
        <dbReference type="Rhea" id="RHEA:68068"/>
        <dbReference type="Rhea" id="RHEA-COMP:11964"/>
        <dbReference type="Rhea" id="RHEA-COMP:11965"/>
        <dbReference type="ChEBI" id="CHEBI:15377"/>
        <dbReference type="ChEBI" id="CHEBI:15378"/>
        <dbReference type="ChEBI" id="CHEBI:15379"/>
        <dbReference type="ChEBI" id="CHEBI:15740"/>
        <dbReference type="ChEBI" id="CHEBI:57618"/>
        <dbReference type="ChEBI" id="CHEBI:58210"/>
        <dbReference type="ChEBI" id="CHEBI:138031"/>
        <dbReference type="ChEBI" id="CHEBI:176902"/>
    </reaction>
    <physiologicalReaction direction="left-to-right" evidence="2">
        <dbReference type="Rhea" id="RHEA:68069"/>
    </physiologicalReaction>
</comment>
<comment type="catalytic activity">
    <reaction evidence="2">
        <text>lanosterol + reduced [NADPH--hemoprotein reductase] + O2 = 32-hydroxylanosterol + oxidized [NADPH--hemoprotein reductase] + H2O + H(+)</text>
        <dbReference type="Rhea" id="RHEA:75103"/>
        <dbReference type="Rhea" id="RHEA-COMP:11964"/>
        <dbReference type="Rhea" id="RHEA-COMP:11965"/>
        <dbReference type="ChEBI" id="CHEBI:15377"/>
        <dbReference type="ChEBI" id="CHEBI:15378"/>
        <dbReference type="ChEBI" id="CHEBI:15379"/>
        <dbReference type="ChEBI" id="CHEBI:16521"/>
        <dbReference type="ChEBI" id="CHEBI:57618"/>
        <dbReference type="ChEBI" id="CHEBI:58210"/>
        <dbReference type="ChEBI" id="CHEBI:166806"/>
    </reaction>
    <physiologicalReaction direction="left-to-right" evidence="2">
        <dbReference type="Rhea" id="RHEA:75104"/>
    </physiologicalReaction>
</comment>
<comment type="catalytic activity">
    <reaction evidence="2">
        <text>32-hydroxylanosterol + reduced [NADPH--hemoprotein reductase] + O2 = 32-oxolanosterol + oxidized [NADPH--hemoprotein reductase] + 2 H2O + H(+)</text>
        <dbReference type="Rhea" id="RHEA:75107"/>
        <dbReference type="Rhea" id="RHEA-COMP:11964"/>
        <dbReference type="Rhea" id="RHEA-COMP:11965"/>
        <dbReference type="ChEBI" id="CHEBI:15377"/>
        <dbReference type="ChEBI" id="CHEBI:15378"/>
        <dbReference type="ChEBI" id="CHEBI:15379"/>
        <dbReference type="ChEBI" id="CHEBI:57618"/>
        <dbReference type="ChEBI" id="CHEBI:58210"/>
        <dbReference type="ChEBI" id="CHEBI:166681"/>
        <dbReference type="ChEBI" id="CHEBI:166806"/>
    </reaction>
    <physiologicalReaction direction="left-to-right" evidence="2">
        <dbReference type="Rhea" id="RHEA:75108"/>
    </physiologicalReaction>
</comment>
<comment type="catalytic activity">
    <reaction evidence="2">
        <text>32-oxolanosterol + reduced [NADPH--hemoprotein reductase] + O2 = 4,4-dimethyl-5alpha-cholesta-8,14,24-trien-3beta-ol + formate + oxidized [NADPH--hemoprotein reductase] + H2O + 2 H(+)</text>
        <dbReference type="Rhea" id="RHEA:75111"/>
        <dbReference type="Rhea" id="RHEA-COMP:11964"/>
        <dbReference type="Rhea" id="RHEA-COMP:11965"/>
        <dbReference type="ChEBI" id="CHEBI:15377"/>
        <dbReference type="ChEBI" id="CHEBI:15378"/>
        <dbReference type="ChEBI" id="CHEBI:15379"/>
        <dbReference type="ChEBI" id="CHEBI:15740"/>
        <dbReference type="ChEBI" id="CHEBI:17813"/>
        <dbReference type="ChEBI" id="CHEBI:57618"/>
        <dbReference type="ChEBI" id="CHEBI:58210"/>
        <dbReference type="ChEBI" id="CHEBI:166681"/>
    </reaction>
    <physiologicalReaction direction="left-to-right" evidence="2">
        <dbReference type="Rhea" id="RHEA:75112"/>
    </physiologicalReaction>
</comment>
<comment type="catalytic activity">
    <reaction evidence="2">
        <text>24,25-dihydrolanosterol + reduced [NADPH--hemoprotein reductase] + O2 = 32-hydroxy-24,25-dihydrolanosterol + oxidized [NADPH--hemoprotein reductase] + H2O + H(+)</text>
        <dbReference type="Rhea" id="RHEA:75079"/>
        <dbReference type="Rhea" id="RHEA-COMP:11964"/>
        <dbReference type="Rhea" id="RHEA-COMP:11965"/>
        <dbReference type="ChEBI" id="CHEBI:15377"/>
        <dbReference type="ChEBI" id="CHEBI:15378"/>
        <dbReference type="ChEBI" id="CHEBI:15379"/>
        <dbReference type="ChEBI" id="CHEBI:28113"/>
        <dbReference type="ChEBI" id="CHEBI:57618"/>
        <dbReference type="ChEBI" id="CHEBI:58210"/>
        <dbReference type="ChEBI" id="CHEBI:87057"/>
    </reaction>
    <physiologicalReaction direction="left-to-right" evidence="2">
        <dbReference type="Rhea" id="RHEA:75080"/>
    </physiologicalReaction>
</comment>
<comment type="catalytic activity">
    <reaction evidence="2">
        <text>32-hydroxy-24,25-dihydrolanosterol + reduced [NADPH--hemoprotein reductase] + O2 = 32-oxo-24,25-dihydrolanosterol + oxidized [NADPH--hemoprotein reductase] + 2 H2O + H(+)</text>
        <dbReference type="Rhea" id="RHEA:75087"/>
        <dbReference type="Rhea" id="RHEA-COMP:11964"/>
        <dbReference type="Rhea" id="RHEA-COMP:11965"/>
        <dbReference type="ChEBI" id="CHEBI:15377"/>
        <dbReference type="ChEBI" id="CHEBI:15378"/>
        <dbReference type="ChEBI" id="CHEBI:15379"/>
        <dbReference type="ChEBI" id="CHEBI:57618"/>
        <dbReference type="ChEBI" id="CHEBI:58210"/>
        <dbReference type="ChEBI" id="CHEBI:87057"/>
        <dbReference type="ChEBI" id="CHEBI:87060"/>
    </reaction>
    <physiologicalReaction direction="left-to-right" evidence="2">
        <dbReference type="Rhea" id="RHEA:75088"/>
    </physiologicalReaction>
</comment>
<comment type="catalytic activity">
    <reaction evidence="2">
        <text>32-oxo-24,25-dihydrolanosterol + reduced [NADPH--hemoprotein reductase] + O2 = 4,4-dimethyl-8,14-cholestadien-3beta-ol + formate + oxidized [NADPH--hemoprotein reductase] + H2O + 2 H(+)</text>
        <dbReference type="Rhea" id="RHEA:75083"/>
        <dbReference type="Rhea" id="RHEA-COMP:11964"/>
        <dbReference type="Rhea" id="RHEA-COMP:11965"/>
        <dbReference type="ChEBI" id="CHEBI:15377"/>
        <dbReference type="ChEBI" id="CHEBI:15378"/>
        <dbReference type="ChEBI" id="CHEBI:15379"/>
        <dbReference type="ChEBI" id="CHEBI:15740"/>
        <dbReference type="ChEBI" id="CHEBI:57618"/>
        <dbReference type="ChEBI" id="CHEBI:58210"/>
        <dbReference type="ChEBI" id="CHEBI:78904"/>
        <dbReference type="ChEBI" id="CHEBI:87060"/>
    </reaction>
    <physiologicalReaction direction="left-to-right" evidence="2">
        <dbReference type="Rhea" id="RHEA:75084"/>
    </physiologicalReaction>
</comment>
<comment type="cofactor">
    <cofactor evidence="1">
        <name>heme</name>
        <dbReference type="ChEBI" id="CHEBI:30413"/>
    </cofactor>
</comment>
<comment type="activity regulation">
    <text evidence="2">Inhibited by azalanstat. Inhibited by azole antifungal agents ketoconazole, itraconazole and fluconazole.</text>
</comment>
<comment type="pathway">
    <text evidence="2">Steroid biosynthesis; zymosterol biosynthesis; zymosterol from lanosterol: step 1/6.</text>
</comment>
<comment type="subcellular location">
    <subcellularLocation>
        <location evidence="2">Endoplasmic reticulum membrane</location>
        <topology evidence="3">Single-pass membrane protein</topology>
    </subcellularLocation>
    <subcellularLocation>
        <location evidence="2">Microsome membrane</location>
        <topology evidence="3">Single-pass membrane protein</topology>
    </subcellularLocation>
</comment>
<comment type="PTM">
    <text evidence="1">Ubiquitinated by MARCHF6, leading to proteasomal degradation.</text>
</comment>
<comment type="similarity">
    <text evidence="4">Belongs to the cytochrome P450 family.</text>
</comment>
<comment type="caution">
    <text evidence="4">It is uncertain whether Met-1 or Met-7 is the initiator.</text>
</comment>
<comment type="sequence caution" evidence="4">
    <conflict type="erroneous initiation">
        <sequence resource="EMBL-CDS" id="BAE01508"/>
    </conflict>
    <text>Truncated N-terminus.</text>
</comment>
<evidence type="ECO:0000250" key="1">
    <source>
        <dbReference type="UniProtKB" id="Q16850"/>
    </source>
</evidence>
<evidence type="ECO:0000250" key="2">
    <source>
        <dbReference type="UniProtKB" id="Q64654"/>
    </source>
</evidence>
<evidence type="ECO:0000255" key="3"/>
<evidence type="ECO:0000305" key="4"/>
<proteinExistence type="evidence at transcript level"/>
<protein>
    <recommendedName>
        <fullName evidence="1">Lanosterol 14-alpha demethylase</fullName>
        <shortName>LDM</shortName>
        <ecNumber evidence="1 2">1.14.14.154</ecNumber>
    </recommendedName>
    <alternativeName>
        <fullName>CYPLI</fullName>
    </alternativeName>
    <alternativeName>
        <fullName>Cytochrome P450 51A1</fullName>
        <shortName evidence="2">CAP51</shortName>
    </alternativeName>
    <alternativeName>
        <fullName>Cytochrome P450-14DM</fullName>
        <shortName>Cytochrome P45014DM</shortName>
    </alternativeName>
    <alternativeName>
        <fullName>Cytochrome P450LI</fullName>
    </alternativeName>
    <alternativeName>
        <fullName>Sterol 14-alpha demethylase</fullName>
    </alternativeName>
</protein>
<keyword id="KW-0152">Cholesterol biosynthesis</keyword>
<keyword id="KW-0153">Cholesterol metabolism</keyword>
<keyword id="KW-0256">Endoplasmic reticulum</keyword>
<keyword id="KW-0349">Heme</keyword>
<keyword id="KW-0408">Iron</keyword>
<keyword id="KW-0444">Lipid biosynthesis</keyword>
<keyword id="KW-0443">Lipid metabolism</keyword>
<keyword id="KW-0472">Membrane</keyword>
<keyword id="KW-0479">Metal-binding</keyword>
<keyword id="KW-0492">Microsome</keyword>
<keyword id="KW-0503">Monooxygenase</keyword>
<keyword id="KW-0560">Oxidoreductase</keyword>
<keyword id="KW-1185">Reference proteome</keyword>
<keyword id="KW-0752">Steroid biosynthesis</keyword>
<keyword id="KW-0753">Steroid metabolism</keyword>
<keyword id="KW-0756">Sterol biosynthesis</keyword>
<keyword id="KW-1207">Sterol metabolism</keyword>
<keyword id="KW-0812">Transmembrane</keyword>
<keyword id="KW-1133">Transmembrane helix</keyword>
<keyword id="KW-0832">Ubl conjugation</keyword>
<feature type="chain" id="PRO_0000052000" description="Lanosterol 14-alpha demethylase">
    <location>
        <begin position="1"/>
        <end position="509"/>
    </location>
</feature>
<feature type="transmembrane region" description="Helical" evidence="3">
    <location>
        <begin position="30"/>
        <end position="50"/>
    </location>
</feature>
<feature type="binding site" description="axial binding residue" evidence="1">
    <location>
        <position position="455"/>
    </location>
    <ligand>
        <name>heme</name>
        <dbReference type="ChEBI" id="CHEBI:30413"/>
    </ligand>
    <ligandPart>
        <name>Fe</name>
        <dbReference type="ChEBI" id="CHEBI:18248"/>
    </ligandPart>
</feature>
<accession>Q4R8S6</accession>
<accession>Q4R5W7</accession>
<name>CP51A_MACFA</name>
<sequence>MAAAAGMMLLGLLQAGGSVLGQAMEKVTGGNLLSMLLIACAFTLSLVYLFRLAAGHLVQLPAGAKSPPYIFSPIPFLGHAIAFGKSPVEFLENAYEKYGPVFSFTMVGKTFTYLLGSDAAALLFNSKNEDLNAEDVYSRLTTPVFGKGVAYDVPNPVFLEQKKMLKSGLNIAHFKQHVSIIEKETKEYFQSWGESGEKNVFEALSELIILTASHCLHGKEIRSQLNEKVAQLYADLDGGFSHAAWLLPGWLPLPSFRRRDRAHREIKNIFYKAIQKRRQSQEKIDDILQTLLDATYKDGRPLTDDEVAGMLIGLLLAGQHTSSTTSAWMGFFLARDKTLQEKCYLEQKTVCGENLPPLTYDQLKDLNLLDRCIKETLRLRPPIMIMMRMARTPQTVAGYTIPPGHQVCVSPTVNQRLKDSWVERLDFNPDRYLQDNPASGEKFAYVPFGAGRHRCIGENFAYVQIKTIWSTMLRLYEFDLIDGYFPTVNYTTMIHTPENPVIRYKRRSK</sequence>
<gene>
    <name evidence="1" type="primary">CYP51A1</name>
    <name type="synonym">CYP51</name>
    <name type="ORF">QtsA-11582</name>
    <name type="ORF">QtsA-20162</name>
</gene>
<reference key="1">
    <citation type="submission" date="2005-05" db="EMBL/GenBank/DDBJ databases">
        <title>Identification of CYP cDNAs from cynomolgus monkey liver.</title>
        <authorList>
            <person name="Uno Y."/>
            <person name="Kito G."/>
            <person name="Kamataki T."/>
            <person name="Nagata R."/>
        </authorList>
    </citation>
    <scope>NUCLEOTIDE SEQUENCE [MRNA]</scope>
</reference>
<reference key="2">
    <citation type="submission" date="2005-06" db="EMBL/GenBank/DDBJ databases">
        <title>DNA sequences of macaque genes expressed in brain or testis and its evolutionary implications.</title>
        <authorList>
            <consortium name="International consortium for macaque cDNA sequencing and analysis"/>
        </authorList>
    </citation>
    <scope>NUCLEOTIDE SEQUENCE [LARGE SCALE MRNA]</scope>
    <source>
        <tissue>Testis</tissue>
    </source>
</reference>